<protein>
    <recommendedName>
        <fullName evidence="6">Probable secreted beta-glucosidase ARB_04747</fullName>
        <ecNumber evidence="1">3.2.1.-</ecNumber>
    </recommendedName>
</protein>
<keyword id="KW-0119">Carbohydrate metabolism</keyword>
<keyword id="KW-0134">Cell wall</keyword>
<keyword id="KW-0961">Cell wall biogenesis/degradation</keyword>
<keyword id="KW-0325">Glycoprotein</keyword>
<keyword id="KW-0326">Glycosidase</keyword>
<keyword id="KW-0378">Hydrolase</keyword>
<keyword id="KW-0624">Polysaccharide degradation</keyword>
<keyword id="KW-1185">Reference proteome</keyword>
<keyword id="KW-0964">Secreted</keyword>
<keyword id="KW-0732">Signal</keyword>
<keyword id="KW-0843">Virulence</keyword>
<evidence type="ECO:0000250" key="1">
    <source>
        <dbReference type="UniProtKB" id="Q59NP5"/>
    </source>
</evidence>
<evidence type="ECO:0000255" key="2"/>
<evidence type="ECO:0000255" key="3">
    <source>
        <dbReference type="PROSITE-ProRule" id="PRU00498"/>
    </source>
</evidence>
<evidence type="ECO:0000256" key="4">
    <source>
        <dbReference type="SAM" id="MobiDB-lite"/>
    </source>
</evidence>
<evidence type="ECO:0000269" key="5">
    <source>
    </source>
</evidence>
<evidence type="ECO:0000305" key="6"/>
<name>SUN41_ARTBC</name>
<dbReference type="EC" id="3.2.1.-" evidence="1"/>
<dbReference type="EMBL" id="ABSU01000002">
    <property type="protein sequence ID" value="EFE35813.1"/>
    <property type="molecule type" value="Genomic_DNA"/>
</dbReference>
<dbReference type="RefSeq" id="XP_003016458.1">
    <property type="nucleotide sequence ID" value="XM_003016412.1"/>
</dbReference>
<dbReference type="STRING" id="663331.D4AM57"/>
<dbReference type="GeneID" id="9521940"/>
<dbReference type="KEGG" id="abe:ARB_04747"/>
<dbReference type="eggNOG" id="ENOG502QPVV">
    <property type="taxonomic scope" value="Eukaryota"/>
</dbReference>
<dbReference type="HOGENOM" id="CLU_033459_1_0_1"/>
<dbReference type="OMA" id="CSYACQS"/>
<dbReference type="OrthoDB" id="5339822at2759"/>
<dbReference type="Proteomes" id="UP000008866">
    <property type="component" value="Unassembled WGS sequence"/>
</dbReference>
<dbReference type="GO" id="GO:0009986">
    <property type="term" value="C:cell surface"/>
    <property type="evidence" value="ECO:0007669"/>
    <property type="project" value="TreeGrafter"/>
</dbReference>
<dbReference type="GO" id="GO:0005576">
    <property type="term" value="C:extracellular region"/>
    <property type="evidence" value="ECO:0007669"/>
    <property type="project" value="UniProtKB-SubCell"/>
</dbReference>
<dbReference type="GO" id="GO:0009277">
    <property type="term" value="C:fungal-type cell wall"/>
    <property type="evidence" value="ECO:0007669"/>
    <property type="project" value="TreeGrafter"/>
</dbReference>
<dbReference type="GO" id="GO:0016798">
    <property type="term" value="F:hydrolase activity, acting on glycosyl bonds"/>
    <property type="evidence" value="ECO:0007669"/>
    <property type="project" value="UniProtKB-KW"/>
</dbReference>
<dbReference type="GO" id="GO:0031505">
    <property type="term" value="P:fungal-type cell wall organization"/>
    <property type="evidence" value="ECO:0007669"/>
    <property type="project" value="TreeGrafter"/>
</dbReference>
<dbReference type="GO" id="GO:0000272">
    <property type="term" value="P:polysaccharide catabolic process"/>
    <property type="evidence" value="ECO:0007669"/>
    <property type="project" value="UniProtKB-KW"/>
</dbReference>
<dbReference type="InterPro" id="IPR051526">
    <property type="entry name" value="Beta-Glucosidase_SUN"/>
</dbReference>
<dbReference type="InterPro" id="IPR005556">
    <property type="entry name" value="SUN"/>
</dbReference>
<dbReference type="PANTHER" id="PTHR31316">
    <property type="entry name" value="BETA-GLUCOSIDASE-LIKE PROTEIN NCA3, MITOCHONDRIAL-RELATED"/>
    <property type="match status" value="1"/>
</dbReference>
<dbReference type="PANTHER" id="PTHR31316:SF0">
    <property type="entry name" value="SECRETED BETA-GLUCOSIDASE SIM1-RELATED"/>
    <property type="match status" value="1"/>
</dbReference>
<dbReference type="Pfam" id="PF03856">
    <property type="entry name" value="SUN"/>
    <property type="match status" value="1"/>
</dbReference>
<sequence>MKFSSGILSLAVAASVQSVQASYHAHGHAHHHRVLNKRADPDVVTIPGPKVYAFILNGSEMSKEQVCAGIRDGRLDWSGQNHDELCGFPVGMQKGSPPACPAPSYVPSPPAAPSSPPAAPQPPSKSPETPEEPKKPEEPKKPEGPKKPEGPKTPSPKKPDGPQHPQTPTGGEGVNRPFPDGEIDCGDFPSKYGAVPVDYLGLGGYTGIQHTTLVGEVFGTIRTAIAGESCTDGAMCSYACPPGYQKSQWPEQQGSTGESVGGLACRNGKLYLTNRKLSTRLCISGVGGVHIKSTISVEISICRTDYPGTESETVPVPLPPHGHLPLTCPQAETYYFWQGKSTSAQYYVNPPGYGPAKACQWGHAGLPIGNWAPVNIGVGEKGGVKWLSMFPNRPTTTAILHMTIEIVGEGLSGKCKHKDGKYYTDTGVNEDGCTVSVLHGEATFVFSYD</sequence>
<comment type="function">
    <text evidence="1">Cell surface beta-glucosidase involved in cytokinesis, cell wall biogenesis, adhesion to host tissue; thus playing an important role in the host-pathogen interaction. Has hydrolytic activity on linear (1-&gt;3)-beta-D-glucans such as laminaribiose and other laminarioligosaccharides.</text>
</comment>
<comment type="subcellular location">
    <subcellularLocation>
        <location evidence="1">Secreted</location>
        <location evidence="1">Cell wall</location>
    </subcellularLocation>
    <subcellularLocation>
        <location evidence="5">Secreted</location>
    </subcellularLocation>
</comment>
<comment type="similarity">
    <text evidence="6">Belongs to the SUN family.</text>
</comment>
<feature type="signal peptide" evidence="2">
    <location>
        <begin position="1"/>
        <end position="21"/>
    </location>
</feature>
<feature type="chain" id="PRO_5003054116" description="Probable secreted beta-glucosidase ARB_04747">
    <location>
        <begin position="22"/>
        <end position="449"/>
    </location>
</feature>
<feature type="region of interest" description="Disordered" evidence="4">
    <location>
        <begin position="96"/>
        <end position="185"/>
    </location>
</feature>
<feature type="compositionally biased region" description="Pro residues" evidence="4">
    <location>
        <begin position="98"/>
        <end position="125"/>
    </location>
</feature>
<feature type="compositionally biased region" description="Basic and acidic residues" evidence="4">
    <location>
        <begin position="131"/>
        <end position="150"/>
    </location>
</feature>
<feature type="glycosylation site" description="N-linked (GlcNAc...) asparagine" evidence="3">
    <location>
        <position position="57"/>
    </location>
</feature>
<gene>
    <name type="ORF">ARB_04747</name>
</gene>
<accession>D4AM57</accession>
<proteinExistence type="evidence at protein level"/>
<organism>
    <name type="scientific">Arthroderma benhamiae (strain ATCC MYA-4681 / CBS 112371)</name>
    <name type="common">Trichophyton mentagrophytes</name>
    <dbReference type="NCBI Taxonomy" id="663331"/>
    <lineage>
        <taxon>Eukaryota</taxon>
        <taxon>Fungi</taxon>
        <taxon>Dikarya</taxon>
        <taxon>Ascomycota</taxon>
        <taxon>Pezizomycotina</taxon>
        <taxon>Eurotiomycetes</taxon>
        <taxon>Eurotiomycetidae</taxon>
        <taxon>Onygenales</taxon>
        <taxon>Arthrodermataceae</taxon>
        <taxon>Trichophyton</taxon>
    </lineage>
</organism>
<reference key="1">
    <citation type="journal article" date="2011" name="Genome Biol.">
        <title>Comparative and functional genomics provide insights into the pathogenicity of dermatophytic fungi.</title>
        <authorList>
            <person name="Burmester A."/>
            <person name="Shelest E."/>
            <person name="Gloeckner G."/>
            <person name="Heddergott C."/>
            <person name="Schindler S."/>
            <person name="Staib P."/>
            <person name="Heidel A."/>
            <person name="Felder M."/>
            <person name="Petzold A."/>
            <person name="Szafranski K."/>
            <person name="Feuermann M."/>
            <person name="Pedruzzi I."/>
            <person name="Priebe S."/>
            <person name="Groth M."/>
            <person name="Winkler R."/>
            <person name="Li W."/>
            <person name="Kniemeyer O."/>
            <person name="Schroeckh V."/>
            <person name="Hertweck C."/>
            <person name="Hube B."/>
            <person name="White T.C."/>
            <person name="Platzer M."/>
            <person name="Guthke R."/>
            <person name="Heitman J."/>
            <person name="Woestemeyer J."/>
            <person name="Zipfel P.F."/>
            <person name="Monod M."/>
            <person name="Brakhage A.A."/>
        </authorList>
    </citation>
    <scope>NUCLEOTIDE SEQUENCE [LARGE SCALE GENOMIC DNA]</scope>
    <source>
        <strain>ATCC MYA-4681 / CBS 112371</strain>
    </source>
</reference>
<reference key="2">
    <citation type="journal article" date="2011" name="Proteomics">
        <title>Identification of novel secreted proteases during extracellular proteolysis by dermatophytes at acidic pH.</title>
        <authorList>
            <person name="Sriranganadane D."/>
            <person name="Waridel P."/>
            <person name="Salamin K."/>
            <person name="Feuermann M."/>
            <person name="Mignon B."/>
            <person name="Staib P."/>
            <person name="Neuhaus J.M."/>
            <person name="Quadroni M."/>
            <person name="Monod M."/>
        </authorList>
    </citation>
    <scope>IDENTIFICATION BY MASS SPECTROMETRY</scope>
    <scope>SUBCELLULAR LOCATION</scope>
</reference>